<feature type="chain" id="PRO_1000018073" description="Arginine--tRNA ligase">
    <location>
        <begin position="1"/>
        <end position="550"/>
    </location>
</feature>
<feature type="short sequence motif" description="'HIGH' region">
    <location>
        <begin position="130"/>
        <end position="140"/>
    </location>
</feature>
<accession>A0PUL8</accession>
<sequence>MTPADLAELLKTTATAVLSEHALDTSALPQTVVVERPRNPEHGDYASNVALQLAKKVGANPRELAGWIVEALTKADGIASAEVAGPGFINLRLETSAQAKIVNAIIDAGSGFGHSELMAAHKVNLEFVSANPTGPIHIGGTRWAAVGDALGRLLSTQGADVVREYYFNDHGAQIDRFANSLIAAAKGEPTPDDGYAGSYINDIAARVLQKAPDALSLPDAQMHETFREIGVDLMFSHIKESLHEFGTDFDVYTHEDSMHSTGRVDQAVARLRETGNIYEKDGATWLRSSSFGDDKDRVVIKSDDKPAYIAGDLAYYLDKRERGFDLCIYMLGADHHGYIARLKAAAAAFGEDPGTVEVLIGQMVNLVRDGQPVRMSKRTGTVITLDDLVEAIGVDAARYSLIRSSVDTPIDIDLALWSSASNENPVYYVQYAHARLSALARNAAELGLIPDTDHLELLSHEKEGVLLRTLGDFPRMLKAAASLREPHRVCRYLEDLAGDYHRFYDSCRVLPQGDEEPTQLHTARLALCQATRQAIANGLGILGVTAPERM</sequence>
<protein>
    <recommendedName>
        <fullName evidence="1">Arginine--tRNA ligase</fullName>
        <ecNumber evidence="1">6.1.1.19</ecNumber>
    </recommendedName>
    <alternativeName>
        <fullName evidence="1">Arginyl-tRNA synthetase</fullName>
        <shortName evidence="1">ArgRS</shortName>
    </alternativeName>
</protein>
<evidence type="ECO:0000255" key="1">
    <source>
        <dbReference type="HAMAP-Rule" id="MF_00123"/>
    </source>
</evidence>
<organism>
    <name type="scientific">Mycobacterium ulcerans (strain Agy99)</name>
    <dbReference type="NCBI Taxonomy" id="362242"/>
    <lineage>
        <taxon>Bacteria</taxon>
        <taxon>Bacillati</taxon>
        <taxon>Actinomycetota</taxon>
        <taxon>Actinomycetes</taxon>
        <taxon>Mycobacteriales</taxon>
        <taxon>Mycobacteriaceae</taxon>
        <taxon>Mycobacterium</taxon>
        <taxon>Mycobacterium ulcerans group</taxon>
    </lineage>
</organism>
<dbReference type="EC" id="6.1.1.19" evidence="1"/>
<dbReference type="EMBL" id="CP000325">
    <property type="protein sequence ID" value="ABL06037.1"/>
    <property type="molecule type" value="Genomic_DNA"/>
</dbReference>
<dbReference type="RefSeq" id="WP_011741642.1">
    <property type="nucleotide sequence ID" value="NC_008611.1"/>
</dbReference>
<dbReference type="SMR" id="A0PUL8"/>
<dbReference type="KEGG" id="mul:MUL_3972"/>
<dbReference type="eggNOG" id="COG0018">
    <property type="taxonomic scope" value="Bacteria"/>
</dbReference>
<dbReference type="HOGENOM" id="CLU_006406_0_1_11"/>
<dbReference type="Proteomes" id="UP000000765">
    <property type="component" value="Chromosome"/>
</dbReference>
<dbReference type="GO" id="GO:0005737">
    <property type="term" value="C:cytoplasm"/>
    <property type="evidence" value="ECO:0007669"/>
    <property type="project" value="UniProtKB-SubCell"/>
</dbReference>
<dbReference type="GO" id="GO:0004814">
    <property type="term" value="F:arginine-tRNA ligase activity"/>
    <property type="evidence" value="ECO:0007669"/>
    <property type="project" value="UniProtKB-UniRule"/>
</dbReference>
<dbReference type="GO" id="GO:0005524">
    <property type="term" value="F:ATP binding"/>
    <property type="evidence" value="ECO:0007669"/>
    <property type="project" value="UniProtKB-UniRule"/>
</dbReference>
<dbReference type="GO" id="GO:0006420">
    <property type="term" value="P:arginyl-tRNA aminoacylation"/>
    <property type="evidence" value="ECO:0007669"/>
    <property type="project" value="UniProtKB-UniRule"/>
</dbReference>
<dbReference type="CDD" id="cd07956">
    <property type="entry name" value="Anticodon_Ia_Arg"/>
    <property type="match status" value="1"/>
</dbReference>
<dbReference type="CDD" id="cd00671">
    <property type="entry name" value="ArgRS_core"/>
    <property type="match status" value="1"/>
</dbReference>
<dbReference type="FunFam" id="1.10.730.10:FF:000008">
    <property type="entry name" value="Arginine--tRNA ligase"/>
    <property type="match status" value="1"/>
</dbReference>
<dbReference type="FunFam" id="3.30.1360.70:FF:000003">
    <property type="entry name" value="Arginine--tRNA ligase"/>
    <property type="match status" value="1"/>
</dbReference>
<dbReference type="FunFam" id="3.40.50.620:FF:000062">
    <property type="entry name" value="Arginine--tRNA ligase"/>
    <property type="match status" value="1"/>
</dbReference>
<dbReference type="Gene3D" id="3.30.1360.70">
    <property type="entry name" value="Arginyl tRNA synthetase N-terminal domain"/>
    <property type="match status" value="1"/>
</dbReference>
<dbReference type="Gene3D" id="3.40.50.620">
    <property type="entry name" value="HUPs"/>
    <property type="match status" value="1"/>
</dbReference>
<dbReference type="Gene3D" id="1.10.730.10">
    <property type="entry name" value="Isoleucyl-tRNA Synthetase, Domain 1"/>
    <property type="match status" value="1"/>
</dbReference>
<dbReference type="HAMAP" id="MF_00123">
    <property type="entry name" value="Arg_tRNA_synth"/>
    <property type="match status" value="1"/>
</dbReference>
<dbReference type="InterPro" id="IPR001412">
    <property type="entry name" value="aa-tRNA-synth_I_CS"/>
</dbReference>
<dbReference type="InterPro" id="IPR001278">
    <property type="entry name" value="Arg-tRNA-ligase"/>
</dbReference>
<dbReference type="InterPro" id="IPR005148">
    <property type="entry name" value="Arg-tRNA-synth_N"/>
</dbReference>
<dbReference type="InterPro" id="IPR036695">
    <property type="entry name" value="Arg-tRNA-synth_N_sf"/>
</dbReference>
<dbReference type="InterPro" id="IPR035684">
    <property type="entry name" value="ArgRS_core"/>
</dbReference>
<dbReference type="InterPro" id="IPR008909">
    <property type="entry name" value="DALR_anticod-bd"/>
</dbReference>
<dbReference type="InterPro" id="IPR014729">
    <property type="entry name" value="Rossmann-like_a/b/a_fold"/>
</dbReference>
<dbReference type="InterPro" id="IPR009080">
    <property type="entry name" value="tRNAsynth_Ia_anticodon-bd"/>
</dbReference>
<dbReference type="NCBIfam" id="TIGR00456">
    <property type="entry name" value="argS"/>
    <property type="match status" value="1"/>
</dbReference>
<dbReference type="PANTHER" id="PTHR11956:SF5">
    <property type="entry name" value="ARGININE--TRNA LIGASE, CYTOPLASMIC"/>
    <property type="match status" value="1"/>
</dbReference>
<dbReference type="PANTHER" id="PTHR11956">
    <property type="entry name" value="ARGINYL-TRNA SYNTHETASE"/>
    <property type="match status" value="1"/>
</dbReference>
<dbReference type="Pfam" id="PF03485">
    <property type="entry name" value="Arg_tRNA_synt_N"/>
    <property type="match status" value="1"/>
</dbReference>
<dbReference type="Pfam" id="PF05746">
    <property type="entry name" value="DALR_1"/>
    <property type="match status" value="1"/>
</dbReference>
<dbReference type="Pfam" id="PF00750">
    <property type="entry name" value="tRNA-synt_1d"/>
    <property type="match status" value="1"/>
</dbReference>
<dbReference type="PRINTS" id="PR01038">
    <property type="entry name" value="TRNASYNTHARG"/>
</dbReference>
<dbReference type="SMART" id="SM01016">
    <property type="entry name" value="Arg_tRNA_synt_N"/>
    <property type="match status" value="1"/>
</dbReference>
<dbReference type="SMART" id="SM00836">
    <property type="entry name" value="DALR_1"/>
    <property type="match status" value="1"/>
</dbReference>
<dbReference type="SUPFAM" id="SSF47323">
    <property type="entry name" value="Anticodon-binding domain of a subclass of class I aminoacyl-tRNA synthetases"/>
    <property type="match status" value="1"/>
</dbReference>
<dbReference type="SUPFAM" id="SSF55190">
    <property type="entry name" value="Arginyl-tRNA synthetase (ArgRS), N-terminal 'additional' domain"/>
    <property type="match status" value="1"/>
</dbReference>
<dbReference type="SUPFAM" id="SSF52374">
    <property type="entry name" value="Nucleotidylyl transferase"/>
    <property type="match status" value="1"/>
</dbReference>
<dbReference type="PROSITE" id="PS00178">
    <property type="entry name" value="AA_TRNA_LIGASE_I"/>
    <property type="match status" value="1"/>
</dbReference>
<gene>
    <name evidence="1" type="primary">argS</name>
    <name type="ordered locus">MUL_3972</name>
</gene>
<proteinExistence type="inferred from homology"/>
<reference key="1">
    <citation type="journal article" date="2007" name="Genome Res.">
        <title>Reductive evolution and niche adaptation inferred from the genome of Mycobacterium ulcerans, the causative agent of Buruli ulcer.</title>
        <authorList>
            <person name="Stinear T.P."/>
            <person name="Seemann T."/>
            <person name="Pidot S."/>
            <person name="Frigui W."/>
            <person name="Reysset G."/>
            <person name="Garnier T."/>
            <person name="Meurice G."/>
            <person name="Simon D."/>
            <person name="Bouchier C."/>
            <person name="Ma L."/>
            <person name="Tichit M."/>
            <person name="Porter J.L."/>
            <person name="Ryan J."/>
            <person name="Johnson P.D.R."/>
            <person name="Davies J.K."/>
            <person name="Jenkin G.A."/>
            <person name="Small P.L.C."/>
            <person name="Jones L.M."/>
            <person name="Tekaia F."/>
            <person name="Laval F."/>
            <person name="Daffe M."/>
            <person name="Parkhill J."/>
            <person name="Cole S.T."/>
        </authorList>
    </citation>
    <scope>NUCLEOTIDE SEQUENCE [LARGE SCALE GENOMIC DNA]</scope>
    <source>
        <strain>Agy99</strain>
    </source>
</reference>
<name>SYR_MYCUA</name>
<comment type="catalytic activity">
    <reaction evidence="1">
        <text>tRNA(Arg) + L-arginine + ATP = L-arginyl-tRNA(Arg) + AMP + diphosphate</text>
        <dbReference type="Rhea" id="RHEA:20301"/>
        <dbReference type="Rhea" id="RHEA-COMP:9658"/>
        <dbReference type="Rhea" id="RHEA-COMP:9673"/>
        <dbReference type="ChEBI" id="CHEBI:30616"/>
        <dbReference type="ChEBI" id="CHEBI:32682"/>
        <dbReference type="ChEBI" id="CHEBI:33019"/>
        <dbReference type="ChEBI" id="CHEBI:78442"/>
        <dbReference type="ChEBI" id="CHEBI:78513"/>
        <dbReference type="ChEBI" id="CHEBI:456215"/>
        <dbReference type="EC" id="6.1.1.19"/>
    </reaction>
</comment>
<comment type="subunit">
    <text evidence="1">Monomer.</text>
</comment>
<comment type="subcellular location">
    <subcellularLocation>
        <location evidence="1">Cytoplasm</location>
    </subcellularLocation>
</comment>
<comment type="similarity">
    <text evidence="1">Belongs to the class-I aminoacyl-tRNA synthetase family.</text>
</comment>
<keyword id="KW-0030">Aminoacyl-tRNA synthetase</keyword>
<keyword id="KW-0067">ATP-binding</keyword>
<keyword id="KW-0963">Cytoplasm</keyword>
<keyword id="KW-0436">Ligase</keyword>
<keyword id="KW-0547">Nucleotide-binding</keyword>
<keyword id="KW-0648">Protein biosynthesis</keyword>